<accession>P01370</accession>
<evidence type="ECO:0000269" key="1">
    <source>
    </source>
</evidence>
<evidence type="ECO:0000305" key="2"/>
<dbReference type="PIR" id="A01641">
    <property type="entry name" value="JTJG3"/>
</dbReference>
<dbReference type="GO" id="GO:0005886">
    <property type="term" value="C:plasma membrane"/>
    <property type="evidence" value="ECO:0007669"/>
    <property type="project" value="UniProtKB-SubCell"/>
</dbReference>
<dbReference type="GO" id="GO:0005186">
    <property type="term" value="F:pheromone activity"/>
    <property type="evidence" value="ECO:0007669"/>
    <property type="project" value="UniProtKB-KW"/>
</dbReference>
<proteinExistence type="evidence at protein level"/>
<comment type="function">
    <text>Tremerogen A-13 is produced by the a mating-type cells and induces formation of conjugation tubes in a mating-type cells.</text>
</comment>
<comment type="subcellular location">
    <subcellularLocation>
        <location evidence="2">Cell membrane</location>
        <topology evidence="2">Lipid-anchor</topology>
        <orientation evidence="2">Cytoplasmic side</orientation>
    </subcellularLocation>
</comment>
<feature type="peptide" id="PRO_0000044223" description="Tremerogen A-13">
    <location>
        <begin position="1"/>
        <end position="13"/>
    </location>
</feature>
<feature type="site" description="Not methylated">
    <location>
        <position position="13"/>
    </location>
</feature>
<feature type="lipid moiety-binding region" description="S-farnesyl cysteine" evidence="1">
    <location>
        <position position="13"/>
    </location>
</feature>
<protein>
    <recommendedName>
        <fullName>Tremerogen A-13</fullName>
    </recommendedName>
</protein>
<keyword id="KW-1003">Cell membrane</keyword>
<keyword id="KW-0903">Direct protein sequencing</keyword>
<keyword id="KW-0449">Lipoprotein</keyword>
<keyword id="KW-0472">Membrane</keyword>
<keyword id="KW-0588">Pheromone</keyword>
<keyword id="KW-0636">Prenylation</keyword>
<reference key="1">
    <citation type="journal article" date="1981" name="Science">
        <title>Peptide sex hormones inducing conjugation tube formation in compatible mating-type cells of Tremella mesenterica.</title>
        <authorList>
            <person name="Sakagami Y."/>
            <person name="Yoshida M."/>
            <person name="Isogai A."/>
            <person name="Suzuki A."/>
        </authorList>
    </citation>
    <scope>PROTEIN SEQUENCE</scope>
    <scope>ISOPRENYLATION AT CYS-13</scope>
</reference>
<organism>
    <name type="scientific">Tremella mesenterica</name>
    <name type="common">Jelly fungus</name>
    <dbReference type="NCBI Taxonomy" id="5217"/>
    <lineage>
        <taxon>Eukaryota</taxon>
        <taxon>Fungi</taxon>
        <taxon>Dikarya</taxon>
        <taxon>Basidiomycota</taxon>
        <taxon>Agaricomycotina</taxon>
        <taxon>Tremellomycetes</taxon>
        <taxon>Tremellales</taxon>
        <taxon>Tremellaceae</taxon>
        <taxon>Tremella</taxon>
    </lineage>
</organism>
<sequence>EGGGNRGDPSGVC</sequence>
<name>TA13_TREME</name>